<name>LEU1_CLOK1</name>
<protein>
    <recommendedName>
        <fullName evidence="1">2-isopropylmalate synthase</fullName>
        <ecNumber evidence="1">2.3.3.13</ecNumber>
    </recommendedName>
    <alternativeName>
        <fullName evidence="1">Alpha-IPM synthase</fullName>
    </alternativeName>
    <alternativeName>
        <fullName evidence="1">Alpha-isopropylmalate synthase</fullName>
    </alternativeName>
</protein>
<comment type="function">
    <text evidence="1">Catalyzes the condensation of the acetyl group of acetyl-CoA with 3-methyl-2-oxobutanoate (2-ketoisovalerate) to form 3-carboxy-3-hydroxy-4-methylpentanoate (2-isopropylmalate).</text>
</comment>
<comment type="catalytic activity">
    <reaction evidence="1">
        <text>3-methyl-2-oxobutanoate + acetyl-CoA + H2O = (2S)-2-isopropylmalate + CoA + H(+)</text>
        <dbReference type="Rhea" id="RHEA:21524"/>
        <dbReference type="ChEBI" id="CHEBI:1178"/>
        <dbReference type="ChEBI" id="CHEBI:11851"/>
        <dbReference type="ChEBI" id="CHEBI:15377"/>
        <dbReference type="ChEBI" id="CHEBI:15378"/>
        <dbReference type="ChEBI" id="CHEBI:57287"/>
        <dbReference type="ChEBI" id="CHEBI:57288"/>
        <dbReference type="EC" id="2.3.3.13"/>
    </reaction>
</comment>
<comment type="cofactor">
    <cofactor evidence="1">
        <name>Mn(2+)</name>
        <dbReference type="ChEBI" id="CHEBI:29035"/>
    </cofactor>
</comment>
<comment type="pathway">
    <text evidence="1">Amino-acid biosynthesis; L-leucine biosynthesis; L-leucine from 3-methyl-2-oxobutanoate: step 1/4.</text>
</comment>
<comment type="subunit">
    <text evidence="1">Homodimer.</text>
</comment>
<comment type="subcellular location">
    <subcellularLocation>
        <location evidence="1">Cytoplasm</location>
    </subcellularLocation>
</comment>
<comment type="similarity">
    <text evidence="1">Belongs to the alpha-IPM synthase/homocitrate synthase family. LeuA type 1 subfamily.</text>
</comment>
<proteinExistence type="inferred from homology"/>
<gene>
    <name evidence="1" type="primary">leuA</name>
    <name type="ordered locus">CKR_1895</name>
</gene>
<accession>B9E371</accession>
<sequence>MTKKIYIFDTTLRDGEQTPKVSLNINDKITIAKQLQKLSVDVIEAGFPKASHGDFEAVKAIAESIQGPVIVGLARASKEDIDCAWEALKGSLKPRIHIFLATSDIHMEHKLKMKPEEVLKRAADMVRYAKGLCPSIEFSPEDATRTRPEFLYKVLEAVIEAGADVVNIPDTVGYTTPVEYGAFIRGIKENVKNIEDAIISVHCHNDLGLAVANSLAAIESGAEQVECAINGLGERAGNAALEEIVMAISTRADSFNCHTDIVTEEITKTSSIVSHVTGMQVQGNKAIVGANAFAHESGIHQHGVLNCRETYEIMTPESVGLKKNFIVLGKHSGRHAFVEHLHEMGYKDLSVEKTDEIFKKFKELADKKKHISDEDIESLVKNEIFHVPEVFKLKYYQVFTGNTVVSTSTVEIECNGKKLSEASCGDGPVDATFKAIEKATGIDVTLNDYFIKAVGSGKDAMGEVTVRIEKEGKIFSAKGISTDIVEASGIAFINAVNKLYYETYSKDLQKISAN</sequence>
<evidence type="ECO:0000255" key="1">
    <source>
        <dbReference type="HAMAP-Rule" id="MF_01025"/>
    </source>
</evidence>
<keyword id="KW-0028">Amino-acid biosynthesis</keyword>
<keyword id="KW-0100">Branched-chain amino acid biosynthesis</keyword>
<keyword id="KW-0963">Cytoplasm</keyword>
<keyword id="KW-0432">Leucine biosynthesis</keyword>
<keyword id="KW-0464">Manganese</keyword>
<keyword id="KW-0479">Metal-binding</keyword>
<keyword id="KW-0808">Transferase</keyword>
<dbReference type="EC" id="2.3.3.13" evidence="1"/>
<dbReference type="EMBL" id="AP009049">
    <property type="protein sequence ID" value="BAH06946.1"/>
    <property type="molecule type" value="Genomic_DNA"/>
</dbReference>
<dbReference type="RefSeq" id="WP_012102499.1">
    <property type="nucleotide sequence ID" value="NC_011837.1"/>
</dbReference>
<dbReference type="SMR" id="B9E371"/>
<dbReference type="KEGG" id="ckr:CKR_1895"/>
<dbReference type="HOGENOM" id="CLU_022158_0_1_9"/>
<dbReference type="UniPathway" id="UPA00048">
    <property type="reaction ID" value="UER00070"/>
</dbReference>
<dbReference type="Proteomes" id="UP000007969">
    <property type="component" value="Chromosome"/>
</dbReference>
<dbReference type="GO" id="GO:0005737">
    <property type="term" value="C:cytoplasm"/>
    <property type="evidence" value="ECO:0007669"/>
    <property type="project" value="UniProtKB-SubCell"/>
</dbReference>
<dbReference type="GO" id="GO:0003852">
    <property type="term" value="F:2-isopropylmalate synthase activity"/>
    <property type="evidence" value="ECO:0007669"/>
    <property type="project" value="UniProtKB-UniRule"/>
</dbReference>
<dbReference type="GO" id="GO:0003985">
    <property type="term" value="F:acetyl-CoA C-acetyltransferase activity"/>
    <property type="evidence" value="ECO:0007669"/>
    <property type="project" value="UniProtKB-UniRule"/>
</dbReference>
<dbReference type="GO" id="GO:0030145">
    <property type="term" value="F:manganese ion binding"/>
    <property type="evidence" value="ECO:0007669"/>
    <property type="project" value="UniProtKB-UniRule"/>
</dbReference>
<dbReference type="GO" id="GO:0009098">
    <property type="term" value="P:L-leucine biosynthetic process"/>
    <property type="evidence" value="ECO:0007669"/>
    <property type="project" value="UniProtKB-UniRule"/>
</dbReference>
<dbReference type="CDD" id="cd07940">
    <property type="entry name" value="DRE_TIM_IPMS"/>
    <property type="match status" value="1"/>
</dbReference>
<dbReference type="FunFam" id="1.10.238.260:FF:000001">
    <property type="entry name" value="2-isopropylmalate synthase"/>
    <property type="match status" value="1"/>
</dbReference>
<dbReference type="FunFam" id="3.20.20.70:FF:000010">
    <property type="entry name" value="2-isopropylmalate synthase"/>
    <property type="match status" value="1"/>
</dbReference>
<dbReference type="FunFam" id="3.30.160.270:FF:000001">
    <property type="entry name" value="2-isopropylmalate synthase"/>
    <property type="match status" value="1"/>
</dbReference>
<dbReference type="Gene3D" id="1.10.238.260">
    <property type="match status" value="1"/>
</dbReference>
<dbReference type="Gene3D" id="3.30.160.270">
    <property type="match status" value="1"/>
</dbReference>
<dbReference type="Gene3D" id="3.20.20.70">
    <property type="entry name" value="Aldolase class I"/>
    <property type="match status" value="1"/>
</dbReference>
<dbReference type="HAMAP" id="MF_01025">
    <property type="entry name" value="LeuA_type1"/>
    <property type="match status" value="1"/>
</dbReference>
<dbReference type="InterPro" id="IPR050073">
    <property type="entry name" value="2-IPM_HCS-like"/>
</dbReference>
<dbReference type="InterPro" id="IPR013709">
    <property type="entry name" value="2-isopropylmalate_synth_dimer"/>
</dbReference>
<dbReference type="InterPro" id="IPR002034">
    <property type="entry name" value="AIPM/Hcit_synth_CS"/>
</dbReference>
<dbReference type="InterPro" id="IPR013785">
    <property type="entry name" value="Aldolase_TIM"/>
</dbReference>
<dbReference type="InterPro" id="IPR054691">
    <property type="entry name" value="LeuA/HCS_post-cat"/>
</dbReference>
<dbReference type="InterPro" id="IPR036230">
    <property type="entry name" value="LeuA_allosteric_dom_sf"/>
</dbReference>
<dbReference type="InterPro" id="IPR005671">
    <property type="entry name" value="LeuA_bact_synth"/>
</dbReference>
<dbReference type="InterPro" id="IPR000891">
    <property type="entry name" value="PYR_CT"/>
</dbReference>
<dbReference type="NCBIfam" id="TIGR00973">
    <property type="entry name" value="leuA_bact"/>
    <property type="match status" value="1"/>
</dbReference>
<dbReference type="NCBIfam" id="NF002085">
    <property type="entry name" value="PRK00915.1-2"/>
    <property type="match status" value="1"/>
</dbReference>
<dbReference type="NCBIfam" id="NF002086">
    <property type="entry name" value="PRK00915.1-3"/>
    <property type="match status" value="1"/>
</dbReference>
<dbReference type="PANTHER" id="PTHR10277:SF9">
    <property type="entry name" value="2-ISOPROPYLMALATE SYNTHASE 1, CHLOROPLASTIC-RELATED"/>
    <property type="match status" value="1"/>
</dbReference>
<dbReference type="PANTHER" id="PTHR10277">
    <property type="entry name" value="HOMOCITRATE SYNTHASE-RELATED"/>
    <property type="match status" value="1"/>
</dbReference>
<dbReference type="Pfam" id="PF22617">
    <property type="entry name" value="HCS_D2"/>
    <property type="match status" value="1"/>
</dbReference>
<dbReference type="Pfam" id="PF00682">
    <property type="entry name" value="HMGL-like"/>
    <property type="match status" value="1"/>
</dbReference>
<dbReference type="Pfam" id="PF08502">
    <property type="entry name" value="LeuA_dimer"/>
    <property type="match status" value="1"/>
</dbReference>
<dbReference type="SMART" id="SM00917">
    <property type="entry name" value="LeuA_dimer"/>
    <property type="match status" value="1"/>
</dbReference>
<dbReference type="SUPFAM" id="SSF110921">
    <property type="entry name" value="2-isopropylmalate synthase LeuA, allosteric (dimerisation) domain"/>
    <property type="match status" value="1"/>
</dbReference>
<dbReference type="SUPFAM" id="SSF51569">
    <property type="entry name" value="Aldolase"/>
    <property type="match status" value="1"/>
</dbReference>
<dbReference type="PROSITE" id="PS00815">
    <property type="entry name" value="AIPM_HOMOCIT_SYNTH_1"/>
    <property type="match status" value="1"/>
</dbReference>
<dbReference type="PROSITE" id="PS00816">
    <property type="entry name" value="AIPM_HOMOCIT_SYNTH_2"/>
    <property type="match status" value="1"/>
</dbReference>
<dbReference type="PROSITE" id="PS50991">
    <property type="entry name" value="PYR_CT"/>
    <property type="match status" value="1"/>
</dbReference>
<organism>
    <name type="scientific">Clostridium kluyveri (strain NBRC 12016)</name>
    <dbReference type="NCBI Taxonomy" id="583346"/>
    <lineage>
        <taxon>Bacteria</taxon>
        <taxon>Bacillati</taxon>
        <taxon>Bacillota</taxon>
        <taxon>Clostridia</taxon>
        <taxon>Eubacteriales</taxon>
        <taxon>Clostridiaceae</taxon>
        <taxon>Clostridium</taxon>
    </lineage>
</organism>
<reference key="1">
    <citation type="submission" date="2005-09" db="EMBL/GenBank/DDBJ databases">
        <title>Complete genome sequence of Clostridium kluyveri and comparative genomics of Clostridia species.</title>
        <authorList>
            <person name="Inui M."/>
            <person name="Nonaka H."/>
            <person name="Shinoda Y."/>
            <person name="Ikenaga Y."/>
            <person name="Abe M."/>
            <person name="Naito K."/>
            <person name="Vertes A.A."/>
            <person name="Yukawa H."/>
        </authorList>
    </citation>
    <scope>NUCLEOTIDE SEQUENCE [LARGE SCALE GENOMIC DNA]</scope>
    <source>
        <strain>NBRC 12016</strain>
    </source>
</reference>
<feature type="chain" id="PRO_1000149170" description="2-isopropylmalate synthase">
    <location>
        <begin position="1"/>
        <end position="514"/>
    </location>
</feature>
<feature type="domain" description="Pyruvate carboxyltransferase" evidence="1">
    <location>
        <begin position="5"/>
        <end position="267"/>
    </location>
</feature>
<feature type="region of interest" description="Regulatory domain" evidence="1">
    <location>
        <begin position="392"/>
        <end position="514"/>
    </location>
</feature>
<feature type="binding site" evidence="1">
    <location>
        <position position="14"/>
    </location>
    <ligand>
        <name>Mn(2+)</name>
        <dbReference type="ChEBI" id="CHEBI:29035"/>
    </ligand>
</feature>
<feature type="binding site" evidence="1">
    <location>
        <position position="202"/>
    </location>
    <ligand>
        <name>Mn(2+)</name>
        <dbReference type="ChEBI" id="CHEBI:29035"/>
    </ligand>
</feature>
<feature type="binding site" evidence="1">
    <location>
        <position position="204"/>
    </location>
    <ligand>
        <name>Mn(2+)</name>
        <dbReference type="ChEBI" id="CHEBI:29035"/>
    </ligand>
</feature>
<feature type="binding site" evidence="1">
    <location>
        <position position="238"/>
    </location>
    <ligand>
        <name>Mn(2+)</name>
        <dbReference type="ChEBI" id="CHEBI:29035"/>
    </ligand>
</feature>